<organism>
    <name type="scientific">Enterobacter sp. (strain 638)</name>
    <dbReference type="NCBI Taxonomy" id="399742"/>
    <lineage>
        <taxon>Bacteria</taxon>
        <taxon>Pseudomonadati</taxon>
        <taxon>Pseudomonadota</taxon>
        <taxon>Gammaproteobacteria</taxon>
        <taxon>Enterobacterales</taxon>
        <taxon>Enterobacteriaceae</taxon>
        <taxon>Enterobacter</taxon>
    </lineage>
</organism>
<reference key="1">
    <citation type="journal article" date="2010" name="PLoS Genet.">
        <title>Genome sequence of the plant growth promoting endophytic bacterium Enterobacter sp. 638.</title>
        <authorList>
            <person name="Taghavi S."/>
            <person name="van der Lelie D."/>
            <person name="Hoffman A."/>
            <person name="Zhang Y.B."/>
            <person name="Walla M.D."/>
            <person name="Vangronsveld J."/>
            <person name="Newman L."/>
            <person name="Monchy S."/>
        </authorList>
    </citation>
    <scope>NUCLEOTIDE SEQUENCE [LARGE SCALE GENOMIC DNA]</scope>
    <source>
        <strain>638</strain>
    </source>
</reference>
<dbReference type="EMBL" id="CP000653">
    <property type="protein sequence ID" value="ABP62779.1"/>
    <property type="molecule type" value="Genomic_DNA"/>
</dbReference>
<dbReference type="RefSeq" id="WP_015961083.1">
    <property type="nucleotide sequence ID" value="NC_009436.1"/>
</dbReference>
<dbReference type="SMR" id="A4WGE9"/>
<dbReference type="STRING" id="399742.Ent638_4126"/>
<dbReference type="GeneID" id="93307130"/>
<dbReference type="KEGG" id="ent:Ent638_4126"/>
<dbReference type="eggNOG" id="COG0356">
    <property type="taxonomic scope" value="Bacteria"/>
</dbReference>
<dbReference type="HOGENOM" id="CLU_041018_1_0_6"/>
<dbReference type="OrthoDB" id="9789241at2"/>
<dbReference type="Proteomes" id="UP000000230">
    <property type="component" value="Chromosome"/>
</dbReference>
<dbReference type="GO" id="GO:0005886">
    <property type="term" value="C:plasma membrane"/>
    <property type="evidence" value="ECO:0007669"/>
    <property type="project" value="UniProtKB-SubCell"/>
</dbReference>
<dbReference type="GO" id="GO:0045259">
    <property type="term" value="C:proton-transporting ATP synthase complex"/>
    <property type="evidence" value="ECO:0007669"/>
    <property type="project" value="UniProtKB-KW"/>
</dbReference>
<dbReference type="GO" id="GO:0046933">
    <property type="term" value="F:proton-transporting ATP synthase activity, rotational mechanism"/>
    <property type="evidence" value="ECO:0007669"/>
    <property type="project" value="UniProtKB-UniRule"/>
</dbReference>
<dbReference type="GO" id="GO:0042777">
    <property type="term" value="P:proton motive force-driven plasma membrane ATP synthesis"/>
    <property type="evidence" value="ECO:0007669"/>
    <property type="project" value="TreeGrafter"/>
</dbReference>
<dbReference type="CDD" id="cd00310">
    <property type="entry name" value="ATP-synt_Fo_a_6"/>
    <property type="match status" value="1"/>
</dbReference>
<dbReference type="FunFam" id="1.20.120.220:FF:000002">
    <property type="entry name" value="ATP synthase subunit a"/>
    <property type="match status" value="1"/>
</dbReference>
<dbReference type="Gene3D" id="1.20.120.220">
    <property type="entry name" value="ATP synthase, F0 complex, subunit A"/>
    <property type="match status" value="1"/>
</dbReference>
<dbReference type="HAMAP" id="MF_01393">
    <property type="entry name" value="ATP_synth_a_bact"/>
    <property type="match status" value="1"/>
</dbReference>
<dbReference type="InterPro" id="IPR045082">
    <property type="entry name" value="ATP_syn_F0_a_bact/chloroplast"/>
</dbReference>
<dbReference type="InterPro" id="IPR000568">
    <property type="entry name" value="ATP_synth_F0_asu"/>
</dbReference>
<dbReference type="InterPro" id="IPR023011">
    <property type="entry name" value="ATP_synth_F0_asu_AS"/>
</dbReference>
<dbReference type="InterPro" id="IPR035908">
    <property type="entry name" value="F0_ATP_A_sf"/>
</dbReference>
<dbReference type="NCBIfam" id="TIGR01131">
    <property type="entry name" value="ATP_synt_6_or_A"/>
    <property type="match status" value="1"/>
</dbReference>
<dbReference type="NCBIfam" id="NF004477">
    <property type="entry name" value="PRK05815.1-1"/>
    <property type="match status" value="1"/>
</dbReference>
<dbReference type="PANTHER" id="PTHR42823">
    <property type="entry name" value="ATP SYNTHASE SUBUNIT A, CHLOROPLASTIC"/>
    <property type="match status" value="1"/>
</dbReference>
<dbReference type="PANTHER" id="PTHR42823:SF3">
    <property type="entry name" value="ATP SYNTHASE SUBUNIT A, CHLOROPLASTIC"/>
    <property type="match status" value="1"/>
</dbReference>
<dbReference type="Pfam" id="PF00119">
    <property type="entry name" value="ATP-synt_A"/>
    <property type="match status" value="1"/>
</dbReference>
<dbReference type="PRINTS" id="PR00123">
    <property type="entry name" value="ATPASEA"/>
</dbReference>
<dbReference type="SUPFAM" id="SSF81336">
    <property type="entry name" value="F1F0 ATP synthase subunit A"/>
    <property type="match status" value="1"/>
</dbReference>
<dbReference type="PROSITE" id="PS00449">
    <property type="entry name" value="ATPASE_A"/>
    <property type="match status" value="1"/>
</dbReference>
<protein>
    <recommendedName>
        <fullName evidence="1">ATP synthase subunit a</fullName>
    </recommendedName>
    <alternativeName>
        <fullName evidence="1">ATP synthase F0 sector subunit a</fullName>
    </alternativeName>
    <alternativeName>
        <fullName evidence="1">F-ATPase subunit 6</fullName>
    </alternativeName>
</protein>
<sequence>MASENMTPQDYIGHHLTNLQMDLRTFSLVDPHNPPATFWTLNIDSMFFSVVLGLLFLAMFRSVAKKATSGVPGKFQTAIELVIGFVHGSVKDMYHGKSKLIAPLALTVFVWVFLMNLMDLLPIDLLPYIGEHVFGLPALRVVPSADVNITLSMALGVFILILFYSIKMKGVSGFVKELTLQPFNHWAFIPVNLILEGVSLLSKPVSLGLRLFGNMYAGELIFILIAGLLPWWSQWILNVPWAIFHILIITLQAFIFMVLTIVYLSMASEEH</sequence>
<comment type="function">
    <text evidence="1">Key component of the proton channel; it plays a direct role in the translocation of protons across the membrane.</text>
</comment>
<comment type="subunit">
    <text evidence="1">F-type ATPases have 2 components, CF(1) - the catalytic core - and CF(0) - the membrane proton channel. CF(1) has five subunits: alpha(3), beta(3), gamma(1), delta(1), epsilon(1). CF(0) has three main subunits: a(1), b(2) and c(9-12). The alpha and beta chains form an alternating ring which encloses part of the gamma chain. CF(1) is attached to CF(0) by a central stalk formed by the gamma and epsilon chains, while a peripheral stalk is formed by the delta and b chains.</text>
</comment>
<comment type="subcellular location">
    <subcellularLocation>
        <location evidence="1">Cell inner membrane</location>
        <topology evidence="1">Multi-pass membrane protein</topology>
    </subcellularLocation>
</comment>
<comment type="similarity">
    <text evidence="1">Belongs to the ATPase A chain family.</text>
</comment>
<keyword id="KW-0066">ATP synthesis</keyword>
<keyword id="KW-0997">Cell inner membrane</keyword>
<keyword id="KW-1003">Cell membrane</keyword>
<keyword id="KW-0138">CF(0)</keyword>
<keyword id="KW-0375">Hydrogen ion transport</keyword>
<keyword id="KW-0406">Ion transport</keyword>
<keyword id="KW-0472">Membrane</keyword>
<keyword id="KW-0812">Transmembrane</keyword>
<keyword id="KW-1133">Transmembrane helix</keyword>
<keyword id="KW-0813">Transport</keyword>
<feature type="chain" id="PRO_0000362295" description="ATP synthase subunit a">
    <location>
        <begin position="1"/>
        <end position="271"/>
    </location>
</feature>
<feature type="transmembrane region" description="Helical" evidence="1">
    <location>
        <begin position="38"/>
        <end position="58"/>
    </location>
</feature>
<feature type="transmembrane region" description="Helical" evidence="1">
    <location>
        <begin position="100"/>
        <end position="120"/>
    </location>
</feature>
<feature type="transmembrane region" description="Helical" evidence="1">
    <location>
        <begin position="146"/>
        <end position="166"/>
    </location>
</feature>
<feature type="transmembrane region" description="Helical" evidence="1">
    <location>
        <begin position="220"/>
        <end position="240"/>
    </location>
</feature>
<feature type="transmembrane region" description="Helical" evidence="1">
    <location>
        <begin position="242"/>
        <end position="262"/>
    </location>
</feature>
<accession>A4WGE9</accession>
<name>ATP6_ENT38</name>
<evidence type="ECO:0000255" key="1">
    <source>
        <dbReference type="HAMAP-Rule" id="MF_01393"/>
    </source>
</evidence>
<proteinExistence type="inferred from homology"/>
<gene>
    <name evidence="1" type="primary">atpB</name>
    <name type="ordered locus">Ent638_4126</name>
</gene>